<feature type="transit peptide" description="Mitochondrion" evidence="2">
    <location>
        <begin position="1"/>
        <end position="24"/>
    </location>
</feature>
<feature type="chain" id="PRO_0000251470" description="Complex I intermediate-associated protein 30, mitochondrial">
    <location>
        <begin position="25"/>
        <end position="327"/>
    </location>
</feature>
<feature type="region of interest" description="Disordered" evidence="3">
    <location>
        <begin position="42"/>
        <end position="63"/>
    </location>
</feature>
<feature type="compositionally biased region" description="Basic and acidic residues" evidence="3">
    <location>
        <begin position="53"/>
        <end position="63"/>
    </location>
</feature>
<feature type="modified residue" description="Phosphoserine" evidence="1">
    <location>
        <position position="318"/>
    </location>
</feature>
<evidence type="ECO:0000250" key="1">
    <source>
        <dbReference type="UniProtKB" id="Q9Y375"/>
    </source>
</evidence>
<evidence type="ECO:0000255" key="2"/>
<evidence type="ECO:0000256" key="3">
    <source>
        <dbReference type="SAM" id="MobiDB-lite"/>
    </source>
</evidence>
<evidence type="ECO:0000305" key="4"/>
<name>CIA30_PONPY</name>
<accession>Q0MQ82</accession>
<dbReference type="EMBL" id="DQ885752">
    <property type="protein sequence ID" value="ABH12261.1"/>
    <property type="molecule type" value="mRNA"/>
</dbReference>
<dbReference type="RefSeq" id="XP_054306296.1">
    <property type="nucleotide sequence ID" value="XM_054450321.2"/>
</dbReference>
<dbReference type="RefSeq" id="XP_054306298.1">
    <property type="nucleotide sequence ID" value="XM_054450323.2"/>
</dbReference>
<dbReference type="SMR" id="Q0MQ82"/>
<dbReference type="GeneID" id="129013714"/>
<dbReference type="GO" id="GO:0005759">
    <property type="term" value="C:mitochondrial matrix"/>
    <property type="evidence" value="ECO:0007669"/>
    <property type="project" value="UniProtKB-SubCell"/>
</dbReference>
<dbReference type="GO" id="GO:0005739">
    <property type="term" value="C:mitochondrion"/>
    <property type="evidence" value="ECO:0000250"/>
    <property type="project" value="UniProtKB"/>
</dbReference>
<dbReference type="GO" id="GO:0051082">
    <property type="term" value="F:unfolded protein binding"/>
    <property type="evidence" value="ECO:0007669"/>
    <property type="project" value="TreeGrafter"/>
</dbReference>
<dbReference type="GO" id="GO:0006120">
    <property type="term" value="P:mitochondrial electron transport, NADH to ubiquinone"/>
    <property type="evidence" value="ECO:0007669"/>
    <property type="project" value="TreeGrafter"/>
</dbReference>
<dbReference type="GO" id="GO:0032981">
    <property type="term" value="P:mitochondrial respiratory chain complex I assembly"/>
    <property type="evidence" value="ECO:0000250"/>
    <property type="project" value="UniProtKB"/>
</dbReference>
<dbReference type="Gene3D" id="2.60.120.430">
    <property type="entry name" value="Galactose-binding lectin"/>
    <property type="match status" value="1"/>
</dbReference>
<dbReference type="InterPro" id="IPR008979">
    <property type="entry name" value="Galactose-bd-like_sf"/>
</dbReference>
<dbReference type="InterPro" id="IPR013857">
    <property type="entry name" value="NADH-UbQ_OxRdtase-assoc_prot30"/>
</dbReference>
<dbReference type="InterPro" id="IPR039131">
    <property type="entry name" value="NDUFAF1"/>
</dbReference>
<dbReference type="PANTHER" id="PTHR13194">
    <property type="entry name" value="COMPLEX I INTERMEDIATE-ASSOCIATED PROTEIN 30"/>
    <property type="match status" value="1"/>
</dbReference>
<dbReference type="PANTHER" id="PTHR13194:SF18">
    <property type="entry name" value="COMPLEX I INTERMEDIATE-ASSOCIATED PROTEIN 30, MITOCHONDRIAL"/>
    <property type="match status" value="1"/>
</dbReference>
<dbReference type="Pfam" id="PF08547">
    <property type="entry name" value="CIA30"/>
    <property type="match status" value="1"/>
</dbReference>
<dbReference type="SUPFAM" id="SSF49785">
    <property type="entry name" value="Galactose-binding domain-like"/>
    <property type="match status" value="1"/>
</dbReference>
<organism>
    <name type="scientific">Pongo pygmaeus</name>
    <name type="common">Bornean orangutan</name>
    <dbReference type="NCBI Taxonomy" id="9600"/>
    <lineage>
        <taxon>Eukaryota</taxon>
        <taxon>Metazoa</taxon>
        <taxon>Chordata</taxon>
        <taxon>Craniata</taxon>
        <taxon>Vertebrata</taxon>
        <taxon>Euteleostomi</taxon>
        <taxon>Mammalia</taxon>
        <taxon>Eutheria</taxon>
        <taxon>Euarchontoglires</taxon>
        <taxon>Primates</taxon>
        <taxon>Haplorrhini</taxon>
        <taxon>Catarrhini</taxon>
        <taxon>Hominidae</taxon>
        <taxon>Pongo</taxon>
    </lineage>
</organism>
<keyword id="KW-0143">Chaperone</keyword>
<keyword id="KW-0496">Mitochondrion</keyword>
<keyword id="KW-0597">Phosphoprotein</keyword>
<keyword id="KW-0809">Transit peptide</keyword>
<sequence length="327" mass="37697">MALVHKLLRGTYILRKFSKPASALYPFLGIRFAEYSSSLQKPVASPGKASSQRKTEGDLQGDHQKEVALDITSSEEKPDVSFDKAIRDEAAYHFRHLKDEIVDHWRGPEGRPLREVLLEQAKVVWQFRGKEDLDKWTVTSDKTIGGRSEVFLKMGKNNQSALLYGTLSSEAPHDGESTRSGYCAMISRIPRGAFERKVSYDWSQFNTLYLRVRGDGRPWMVNIKEDTDFFQRTNQMYSYFMFTRGGPYWQEVKIPFSKFFFSNRGRIRDVQHELPLDKISSIGFTLADKVDGPFFLEIDFIGVFTDPAHTEEFAYENSPELNPRLFK</sequence>
<protein>
    <recommendedName>
        <fullName evidence="1">Complex I intermediate-associated protein 30, mitochondrial</fullName>
    </recommendedName>
    <alternativeName>
        <fullName>NADH dehydrogenase [ubiquinone] 1 alpha subcomplex assembly factor 1</fullName>
    </alternativeName>
</protein>
<gene>
    <name evidence="1" type="primary">NDUFAF1</name>
</gene>
<comment type="function">
    <text evidence="1">As part of the MCIA complex, involved in the assembly of the mitochondrial complex I.</text>
</comment>
<comment type="subunit">
    <text evidence="1">Part of the mitochondrial complex I assembly/MCIA complex that comprises at least the core subunits TMEM126B, NDUFAF1, ECSIT and ACAD9 and complement subunits such as COA1 and TMEM186. Interacts with ECSIT. Interacts with ACAD9. At early stages of complex I assembly, it is found in intermediate subcomplexes that contain different subunits including NDUFB6, NDUFA6, NDUFA9, NDUFS3, NDUFS7, ND1, ND2 and ND3. Interacts with TMEM70 and TMEM242 (By similarity).</text>
</comment>
<comment type="subcellular location">
    <subcellularLocation>
        <location evidence="1">Mitochondrion</location>
    </subcellularLocation>
    <subcellularLocation>
        <location evidence="1">Mitochondrion matrix</location>
    </subcellularLocation>
    <text evidence="1">Periferally associated with the matrix face of the mitochondrial inner membrane.</text>
</comment>
<comment type="similarity">
    <text evidence="4">Belongs to the CIA30 family.</text>
</comment>
<reference key="1">
    <citation type="journal article" date="2006" name="Gene">
        <title>Adaptive selection of mitochondrial complex I subunits during primate radiation.</title>
        <authorList>
            <person name="Mishmar D."/>
            <person name="Ruiz-Pesini E."/>
            <person name="Mondragon-Palomino M."/>
            <person name="Procaccio V."/>
            <person name="Gaut B."/>
            <person name="Wallace D.C."/>
        </authorList>
    </citation>
    <scope>NUCLEOTIDE SEQUENCE [MRNA]</scope>
</reference>
<proteinExistence type="evidence at transcript level"/>